<proteinExistence type="evidence at protein level"/>
<gene>
    <name evidence="12" type="primary">SARDH</name>
    <name type="synonym">DMGDHL1</name>
</gene>
<reference key="1">
    <citation type="journal article" date="1999" name="Genomics">
        <title>Cloning and mapping of the cDNA for human sarcosine dehydrogenase, a flavoenzyme defective in patients with sarcosinemia.</title>
        <authorList>
            <person name="Eschenbrenner M."/>
            <person name="Jorns M.S."/>
        </authorList>
    </citation>
    <scope>NUCLEOTIDE SEQUENCE [MRNA] (ISOFORM 1)</scope>
    <scope>POTENTIAL TRANSIT PEPTIDE</scope>
    <scope>INVOLVEMENT IN SARCOS</scope>
    <scope>TISSUE SPECIFICITY</scope>
    <source>
        <tissue>Liver</tissue>
    </source>
</reference>
<reference key="2">
    <citation type="submission" date="1999-06" db="EMBL/GenBank/DDBJ databases">
        <title>Characterization and cloning of human sarcosine dehydrogenase genomic and cDNA.</title>
        <authorList>
            <person name="Hoard H.M."/>
            <person name="Binzak B.A."/>
            <person name="Vockley J."/>
        </authorList>
    </citation>
    <scope>NUCLEOTIDE SEQUENCE [GENOMIC DNA / MRNA] (ISOFORM 1)</scope>
</reference>
<reference key="3">
    <citation type="journal article" date="2004" name="Nat. Genet.">
        <title>Complete sequencing and characterization of 21,243 full-length human cDNAs.</title>
        <authorList>
            <person name="Ota T."/>
            <person name="Suzuki Y."/>
            <person name="Nishikawa T."/>
            <person name="Otsuki T."/>
            <person name="Sugiyama T."/>
            <person name="Irie R."/>
            <person name="Wakamatsu A."/>
            <person name="Hayashi K."/>
            <person name="Sato H."/>
            <person name="Nagai K."/>
            <person name="Kimura K."/>
            <person name="Makita H."/>
            <person name="Sekine M."/>
            <person name="Obayashi M."/>
            <person name="Nishi T."/>
            <person name="Shibahara T."/>
            <person name="Tanaka T."/>
            <person name="Ishii S."/>
            <person name="Yamamoto J."/>
            <person name="Saito K."/>
            <person name="Kawai Y."/>
            <person name="Isono Y."/>
            <person name="Nakamura Y."/>
            <person name="Nagahari K."/>
            <person name="Murakami K."/>
            <person name="Yasuda T."/>
            <person name="Iwayanagi T."/>
            <person name="Wagatsuma M."/>
            <person name="Shiratori A."/>
            <person name="Sudo H."/>
            <person name="Hosoiri T."/>
            <person name="Kaku Y."/>
            <person name="Kodaira H."/>
            <person name="Kondo H."/>
            <person name="Sugawara M."/>
            <person name="Takahashi M."/>
            <person name="Kanda K."/>
            <person name="Yokoi T."/>
            <person name="Furuya T."/>
            <person name="Kikkawa E."/>
            <person name="Omura Y."/>
            <person name="Abe K."/>
            <person name="Kamihara K."/>
            <person name="Katsuta N."/>
            <person name="Sato K."/>
            <person name="Tanikawa M."/>
            <person name="Yamazaki M."/>
            <person name="Ninomiya K."/>
            <person name="Ishibashi T."/>
            <person name="Yamashita H."/>
            <person name="Murakawa K."/>
            <person name="Fujimori K."/>
            <person name="Tanai H."/>
            <person name="Kimata M."/>
            <person name="Watanabe M."/>
            <person name="Hiraoka S."/>
            <person name="Chiba Y."/>
            <person name="Ishida S."/>
            <person name="Ono Y."/>
            <person name="Takiguchi S."/>
            <person name="Watanabe S."/>
            <person name="Yosida M."/>
            <person name="Hotuta T."/>
            <person name="Kusano J."/>
            <person name="Kanehori K."/>
            <person name="Takahashi-Fujii A."/>
            <person name="Hara H."/>
            <person name="Tanase T.-O."/>
            <person name="Nomura Y."/>
            <person name="Togiya S."/>
            <person name="Komai F."/>
            <person name="Hara R."/>
            <person name="Takeuchi K."/>
            <person name="Arita M."/>
            <person name="Imose N."/>
            <person name="Musashino K."/>
            <person name="Yuuki H."/>
            <person name="Oshima A."/>
            <person name="Sasaki N."/>
            <person name="Aotsuka S."/>
            <person name="Yoshikawa Y."/>
            <person name="Matsunawa H."/>
            <person name="Ichihara T."/>
            <person name="Shiohata N."/>
            <person name="Sano S."/>
            <person name="Moriya S."/>
            <person name="Momiyama H."/>
            <person name="Satoh N."/>
            <person name="Takami S."/>
            <person name="Terashima Y."/>
            <person name="Suzuki O."/>
            <person name="Nakagawa S."/>
            <person name="Senoh A."/>
            <person name="Mizoguchi H."/>
            <person name="Goto Y."/>
            <person name="Shimizu F."/>
            <person name="Wakebe H."/>
            <person name="Hishigaki H."/>
            <person name="Watanabe T."/>
            <person name="Sugiyama A."/>
            <person name="Takemoto M."/>
            <person name="Kawakami B."/>
            <person name="Yamazaki M."/>
            <person name="Watanabe K."/>
            <person name="Kumagai A."/>
            <person name="Itakura S."/>
            <person name="Fukuzumi Y."/>
            <person name="Fujimori Y."/>
            <person name="Komiyama M."/>
            <person name="Tashiro H."/>
            <person name="Tanigami A."/>
            <person name="Fujiwara T."/>
            <person name="Ono T."/>
            <person name="Yamada K."/>
            <person name="Fujii Y."/>
            <person name="Ozaki K."/>
            <person name="Hirao M."/>
            <person name="Ohmori Y."/>
            <person name="Kawabata A."/>
            <person name="Hikiji T."/>
            <person name="Kobatake N."/>
            <person name="Inagaki H."/>
            <person name="Ikema Y."/>
            <person name="Okamoto S."/>
            <person name="Okitani R."/>
            <person name="Kawakami T."/>
            <person name="Noguchi S."/>
            <person name="Itoh T."/>
            <person name="Shigeta K."/>
            <person name="Senba T."/>
            <person name="Matsumura K."/>
            <person name="Nakajima Y."/>
            <person name="Mizuno T."/>
            <person name="Morinaga M."/>
            <person name="Sasaki M."/>
            <person name="Togashi T."/>
            <person name="Oyama M."/>
            <person name="Hata H."/>
            <person name="Watanabe M."/>
            <person name="Komatsu T."/>
            <person name="Mizushima-Sugano J."/>
            <person name="Satoh T."/>
            <person name="Shirai Y."/>
            <person name="Takahashi Y."/>
            <person name="Nakagawa K."/>
            <person name="Okumura K."/>
            <person name="Nagase T."/>
            <person name="Nomura N."/>
            <person name="Kikuchi H."/>
            <person name="Masuho Y."/>
            <person name="Yamashita R."/>
            <person name="Nakai K."/>
            <person name="Yada T."/>
            <person name="Nakamura Y."/>
            <person name="Ohara O."/>
            <person name="Isogai T."/>
            <person name="Sugano S."/>
        </authorList>
    </citation>
    <scope>NUCLEOTIDE SEQUENCE [LARGE SCALE MRNA] (ISOFORM 2)</scope>
    <source>
        <tissue>Kidney</tissue>
    </source>
</reference>
<reference key="4">
    <citation type="journal article" date="2004" name="Nature">
        <title>DNA sequence and analysis of human chromosome 9.</title>
        <authorList>
            <person name="Humphray S.J."/>
            <person name="Oliver K."/>
            <person name="Hunt A.R."/>
            <person name="Plumb R.W."/>
            <person name="Loveland J.E."/>
            <person name="Howe K.L."/>
            <person name="Andrews T.D."/>
            <person name="Searle S."/>
            <person name="Hunt S.E."/>
            <person name="Scott C.E."/>
            <person name="Jones M.C."/>
            <person name="Ainscough R."/>
            <person name="Almeida J.P."/>
            <person name="Ambrose K.D."/>
            <person name="Ashwell R.I.S."/>
            <person name="Babbage A.K."/>
            <person name="Babbage S."/>
            <person name="Bagguley C.L."/>
            <person name="Bailey J."/>
            <person name="Banerjee R."/>
            <person name="Barker D.J."/>
            <person name="Barlow K.F."/>
            <person name="Bates K."/>
            <person name="Beasley H."/>
            <person name="Beasley O."/>
            <person name="Bird C.P."/>
            <person name="Bray-Allen S."/>
            <person name="Brown A.J."/>
            <person name="Brown J.Y."/>
            <person name="Burford D."/>
            <person name="Burrill W."/>
            <person name="Burton J."/>
            <person name="Carder C."/>
            <person name="Carter N.P."/>
            <person name="Chapman J.C."/>
            <person name="Chen Y."/>
            <person name="Clarke G."/>
            <person name="Clark S.Y."/>
            <person name="Clee C.M."/>
            <person name="Clegg S."/>
            <person name="Collier R.E."/>
            <person name="Corby N."/>
            <person name="Crosier M."/>
            <person name="Cummings A.T."/>
            <person name="Davies J."/>
            <person name="Dhami P."/>
            <person name="Dunn M."/>
            <person name="Dutta I."/>
            <person name="Dyer L.W."/>
            <person name="Earthrowl M.E."/>
            <person name="Faulkner L."/>
            <person name="Fleming C.J."/>
            <person name="Frankish A."/>
            <person name="Frankland J.A."/>
            <person name="French L."/>
            <person name="Fricker D.G."/>
            <person name="Garner P."/>
            <person name="Garnett J."/>
            <person name="Ghori J."/>
            <person name="Gilbert J.G.R."/>
            <person name="Glison C."/>
            <person name="Grafham D.V."/>
            <person name="Gribble S."/>
            <person name="Griffiths C."/>
            <person name="Griffiths-Jones S."/>
            <person name="Grocock R."/>
            <person name="Guy J."/>
            <person name="Hall R.E."/>
            <person name="Hammond S."/>
            <person name="Harley J.L."/>
            <person name="Harrison E.S.I."/>
            <person name="Hart E.A."/>
            <person name="Heath P.D."/>
            <person name="Henderson C.D."/>
            <person name="Hopkins B.L."/>
            <person name="Howard P.J."/>
            <person name="Howden P.J."/>
            <person name="Huckle E."/>
            <person name="Johnson C."/>
            <person name="Johnson D."/>
            <person name="Joy A.A."/>
            <person name="Kay M."/>
            <person name="Keenan S."/>
            <person name="Kershaw J.K."/>
            <person name="Kimberley A.M."/>
            <person name="King A."/>
            <person name="Knights A."/>
            <person name="Laird G.K."/>
            <person name="Langford C."/>
            <person name="Lawlor S."/>
            <person name="Leongamornlert D.A."/>
            <person name="Leversha M."/>
            <person name="Lloyd C."/>
            <person name="Lloyd D.M."/>
            <person name="Lovell J."/>
            <person name="Martin S."/>
            <person name="Mashreghi-Mohammadi M."/>
            <person name="Matthews L."/>
            <person name="McLaren S."/>
            <person name="McLay K.E."/>
            <person name="McMurray A."/>
            <person name="Milne S."/>
            <person name="Nickerson T."/>
            <person name="Nisbett J."/>
            <person name="Nordsiek G."/>
            <person name="Pearce A.V."/>
            <person name="Peck A.I."/>
            <person name="Porter K.M."/>
            <person name="Pandian R."/>
            <person name="Pelan S."/>
            <person name="Phillimore B."/>
            <person name="Povey S."/>
            <person name="Ramsey Y."/>
            <person name="Rand V."/>
            <person name="Scharfe M."/>
            <person name="Sehra H.K."/>
            <person name="Shownkeen R."/>
            <person name="Sims S.K."/>
            <person name="Skuce C.D."/>
            <person name="Smith M."/>
            <person name="Steward C.A."/>
            <person name="Swarbreck D."/>
            <person name="Sycamore N."/>
            <person name="Tester J."/>
            <person name="Thorpe A."/>
            <person name="Tracey A."/>
            <person name="Tromans A."/>
            <person name="Thomas D.W."/>
            <person name="Wall M."/>
            <person name="Wallis J.M."/>
            <person name="West A.P."/>
            <person name="Whitehead S.L."/>
            <person name="Willey D.L."/>
            <person name="Williams S.A."/>
            <person name="Wilming L."/>
            <person name="Wray P.W."/>
            <person name="Young L."/>
            <person name="Ashurst J.L."/>
            <person name="Coulson A."/>
            <person name="Blocker H."/>
            <person name="Durbin R.M."/>
            <person name="Sulston J.E."/>
            <person name="Hubbard T."/>
            <person name="Jackson M.J."/>
            <person name="Bentley D.R."/>
            <person name="Beck S."/>
            <person name="Rogers J."/>
            <person name="Dunham I."/>
        </authorList>
    </citation>
    <scope>NUCLEOTIDE SEQUENCE [LARGE SCALE GENOMIC DNA]</scope>
</reference>
<reference key="5">
    <citation type="submission" date="2005-07" db="EMBL/GenBank/DDBJ databases">
        <authorList>
            <person name="Mural R.J."/>
            <person name="Istrail S."/>
            <person name="Sutton G.G."/>
            <person name="Florea L."/>
            <person name="Halpern A.L."/>
            <person name="Mobarry C.M."/>
            <person name="Lippert R."/>
            <person name="Walenz B."/>
            <person name="Shatkay H."/>
            <person name="Dew I."/>
            <person name="Miller J.R."/>
            <person name="Flanigan M.J."/>
            <person name="Edwards N.J."/>
            <person name="Bolanos R."/>
            <person name="Fasulo D."/>
            <person name="Halldorsson B.V."/>
            <person name="Hannenhalli S."/>
            <person name="Turner R."/>
            <person name="Yooseph S."/>
            <person name="Lu F."/>
            <person name="Nusskern D.R."/>
            <person name="Shue B.C."/>
            <person name="Zheng X.H."/>
            <person name="Zhong F."/>
            <person name="Delcher A.L."/>
            <person name="Huson D.H."/>
            <person name="Kravitz S.A."/>
            <person name="Mouchard L."/>
            <person name="Reinert K."/>
            <person name="Remington K.A."/>
            <person name="Clark A.G."/>
            <person name="Waterman M.S."/>
            <person name="Eichler E.E."/>
            <person name="Adams M.D."/>
            <person name="Hunkapiller M.W."/>
            <person name="Myers E.W."/>
            <person name="Venter J.C."/>
        </authorList>
    </citation>
    <scope>NUCLEOTIDE SEQUENCE [LARGE SCALE GENOMIC DNA]</scope>
</reference>
<reference key="6">
    <citation type="journal article" date="2004" name="Genome Res.">
        <title>The status, quality, and expansion of the NIH full-length cDNA project: the Mammalian Gene Collection (MGC).</title>
        <authorList>
            <consortium name="The MGC Project Team"/>
        </authorList>
    </citation>
    <scope>NUCLEOTIDE SEQUENCE [LARGE SCALE MRNA] (ISOFORM 1)</scope>
    <scope>VARIANT HIS-614</scope>
</reference>
<reference key="7">
    <citation type="journal article" date="2000" name="Hum. Hered.">
        <title>Physical and cDNA mapping in the DBH region of human chromosome 9q34.</title>
        <authorList>
            <person name="Gilbert J.R."/>
            <person name="Kumar A."/>
            <person name="Newey S."/>
            <person name="Rao N."/>
            <person name="Ioannou P."/>
            <person name="Qiu H."/>
            <person name="Lin D."/>
            <person name="Xu P."/>
            <person name="Pettenati M.J."/>
            <person name="Pericak-Vance M.A."/>
        </authorList>
    </citation>
    <scope>NUCLEOTIDE SEQUENCE [GENOMIC DNA] OF 239-882</scope>
    <scope>VARIANTS HIS-614 AND VAL-648</scope>
    <source>
        <tissue>Brain</tissue>
    </source>
</reference>
<reference key="8">
    <citation type="journal article" date="2007" name="Mol. Cell. Proteomics">
        <title>Quantitative phosphoproteome profiling of Wnt3a-mediated signaling network: indicating the involvement of ribonucleoside-diphosphate reductase M2 subunit phosphorylation at residue serine 20 in canonical Wnt signal transduction.</title>
        <authorList>
            <person name="Tang L.-Y."/>
            <person name="Deng N."/>
            <person name="Wang L.-S."/>
            <person name="Dai J."/>
            <person name="Wang Z.-L."/>
            <person name="Jiang X.-S."/>
            <person name="Li S.-J."/>
            <person name="Li L."/>
            <person name="Sheng Q.-H."/>
            <person name="Wu D.-Q."/>
            <person name="Li L."/>
            <person name="Zeng R."/>
        </authorList>
    </citation>
    <scope>PHOSPHORYLATION [LARGE SCALE ANALYSIS] AT TYR-777</scope>
    <scope>IDENTIFICATION BY MASS SPECTROMETRY [LARGE SCALE ANALYSIS]</scope>
    <source>
        <tissue>Embryonic kidney</tissue>
    </source>
</reference>
<reference key="9">
    <citation type="journal article" date="2014" name="J. Proteomics">
        <title>An enzyme assisted RP-RPLC approach for in-depth analysis of human liver phosphoproteome.</title>
        <authorList>
            <person name="Bian Y."/>
            <person name="Song C."/>
            <person name="Cheng K."/>
            <person name="Dong M."/>
            <person name="Wang F."/>
            <person name="Huang J."/>
            <person name="Sun D."/>
            <person name="Wang L."/>
            <person name="Ye M."/>
            <person name="Zou H."/>
        </authorList>
    </citation>
    <scope>IDENTIFICATION BY MASS SPECTROMETRY [LARGE SCALE ANALYSIS]</scope>
    <source>
        <tissue>Liver</tissue>
    </source>
</reference>
<reference key="10">
    <citation type="journal article" date="2012" name="Hum. Genet.">
        <title>Mutations in the sarcosine dehydrogenase gene in patients with sarcosinemia.</title>
        <authorList>
            <person name="Bar-joseph I."/>
            <person name="Pras E."/>
            <person name="Reznik-Wolf H."/>
            <person name="Marek-Yagel D."/>
            <person name="Abu-Horvitz A."/>
            <person name="Dushnitzky M."/>
            <person name="Goldstein N."/>
            <person name="Rienstein S."/>
            <person name="Dekel M."/>
            <person name="Pode-Shakked B."/>
            <person name="Zlotnik J."/>
            <person name="Benarrosh A."/>
            <person name="Gillery P."/>
            <person name="Hofliger N."/>
            <person name="Auray-Blais C."/>
            <person name="Garnotel R."/>
            <person name="Anikster Y."/>
        </authorList>
    </citation>
    <scope>VARIANTS SARCOS PHE-71 AND LEU-287</scope>
</reference>
<sequence>MASLSRALRVAAAHPRQSPTRGMGPCNLSSAAGPTAEKSVPYQRTLKEGQGTSVVAQGPSRPLPSTANVVVIGGGSLGCQTLYHLAKLGMSGAVLLERERLTSGTTWHTAGLLWQLRPSDVEVELLAHTRRVVSRELEEETGLHTGWIQNGGLFIASNRQRLDEYKRLMSLGKAYGVESHVLSPAETKTLYPLMNVDDLYGTLYVPHDGTMDPAGTCTTLARAASARGAQVIENCPVTGIRVWTDDFGVRRVAGVETQHGSIQTPCVVNCAGVWASAVGRMAGVKVPLVAMHHAYVVTERIEGIQNMPNVRDHDASVYLRLQGDALSVGGYEANPIFWEEVSDKFAFGLFDLDWEVFTQHIEGAINRVPVLEKTGIKSTVCGPESFTPDHKPLMGEAPELRGFFLGCGFNSAGMMLGGGCGQELAHWIIHGRPEKDMHGYDIRRFHHSLTDHPRWIRERSHESYAKNYSVVFPHDEPLAGRNMRRDPLHEELLGQGCVFQERHGWERPGWFHPRGPAPVLEYDYYGAYGSRAHEDYAYRRLLADEYTFAFPPHHDTIKKECLACRGAAAVFDMSYFGKFYLVGLDARKAADWLFSADVSRPPGSTVYTCMLNHRGGTESDLTVSRLAPSHQASPLAPAFEGDGYYLAMGGAVAQHNWSHITTVLQDQKSQCQLIDSSEDLGMISIQGPASRAILQEVLDADLSNEAFPFSTHKLLRAAGHLVRAMRLSFVGELGWELHIPKASCVPVYRAVMAAGAKHGLINAGYRAIDSLSIEKGYRHWHADLRPDDSPLEAGLAFTCKLKSPVPFLGREALEQQRAAGLRRRLVCFTMEDKVPMFGLEAIWRNGQVVGHVRRADFGFAIDKTIAYGYIHDPSGGPVSLDFVKSGDYALERMGVTYGAQAHLKSPFDPNNKRVKGIY</sequence>
<evidence type="ECO:0000250" key="1"/>
<evidence type="ECO:0000250" key="2">
    <source>
        <dbReference type="UniProtKB" id="Q64380"/>
    </source>
</evidence>
<evidence type="ECO:0000250" key="3">
    <source>
        <dbReference type="UniProtKB" id="Q99LB7"/>
    </source>
</evidence>
<evidence type="ECO:0000255" key="4"/>
<evidence type="ECO:0000256" key="5">
    <source>
        <dbReference type="SAM" id="MobiDB-lite"/>
    </source>
</evidence>
<evidence type="ECO:0000269" key="6">
    <source>
    </source>
</evidence>
<evidence type="ECO:0000269" key="7">
    <source>
    </source>
</evidence>
<evidence type="ECO:0000269" key="8">
    <source>
    </source>
</evidence>
<evidence type="ECO:0000269" key="9">
    <source>
    </source>
</evidence>
<evidence type="ECO:0000303" key="10">
    <source>
    </source>
</evidence>
<evidence type="ECO:0000305" key="11"/>
<evidence type="ECO:0000312" key="12">
    <source>
        <dbReference type="HGNC" id="HGNC:10536"/>
    </source>
</evidence>
<evidence type="ECO:0007744" key="13">
    <source>
    </source>
</evidence>
<name>SARDH_HUMAN</name>
<protein>
    <recommendedName>
        <fullName evidence="11">Sarcosine dehydrogenase, mitochondrial</fullName>
        <shortName>SarDH</shortName>
        <ecNumber evidence="2">1.5.8.3</ecNumber>
    </recommendedName>
    <alternativeName>
        <fullName>BPR-2</fullName>
    </alternativeName>
</protein>
<feature type="transit peptide" description="Mitochondrion" evidence="4">
    <location>
        <begin position="1"/>
        <end position="22"/>
    </location>
</feature>
<feature type="chain" id="PRO_0000010770" description="Sarcosine dehydrogenase, mitochondrial">
    <location>
        <begin position="23"/>
        <end position="918"/>
    </location>
</feature>
<feature type="region of interest" description="Disordered" evidence="5">
    <location>
        <begin position="1"/>
        <end position="40"/>
    </location>
</feature>
<feature type="compositionally biased region" description="Low complexity" evidence="5">
    <location>
        <begin position="1"/>
        <end position="13"/>
    </location>
</feature>
<feature type="modified residue" description="N6-succinyllysine" evidence="3">
    <location>
        <position position="38"/>
    </location>
</feature>
<feature type="modified residue" description="Tele-8alpha-FAD histidine" evidence="1">
    <location>
        <position position="108"/>
    </location>
</feature>
<feature type="modified residue" description="N6-acetyllysine; alternate" evidence="3">
    <location>
        <position position="173"/>
    </location>
</feature>
<feature type="modified residue" description="N6-succinyllysine; alternate" evidence="3">
    <location>
        <position position="173"/>
    </location>
</feature>
<feature type="modified residue" description="N6-succinyllysine" evidence="3">
    <location>
        <position position="377"/>
    </location>
</feature>
<feature type="modified residue" description="N6-succinyllysine" evidence="3">
    <location>
        <position position="391"/>
    </location>
</feature>
<feature type="modified residue" description="N6-acetyllysine" evidence="3">
    <location>
        <position position="559"/>
    </location>
</feature>
<feature type="modified residue" description="N6-acetyllysine" evidence="3">
    <location>
        <position position="775"/>
    </location>
</feature>
<feature type="modified residue" description="Phosphotyrosine" evidence="13">
    <location>
        <position position="777"/>
    </location>
</feature>
<feature type="modified residue" description="N6-acetyllysine; alternate" evidence="3">
    <location>
        <position position="802"/>
    </location>
</feature>
<feature type="modified residue" description="N6-succinyllysine; alternate" evidence="3">
    <location>
        <position position="802"/>
    </location>
</feature>
<feature type="modified residue" description="N6-acetyllysine; alternate" evidence="3">
    <location>
        <position position="884"/>
    </location>
</feature>
<feature type="modified residue" description="N6-succinyllysine; alternate" evidence="3">
    <location>
        <position position="884"/>
    </location>
</feature>
<feature type="modified residue" description="N6-acetyllysine; alternate" evidence="3">
    <location>
        <position position="904"/>
    </location>
</feature>
<feature type="modified residue" description="N6-succinyllysine; alternate" evidence="3">
    <location>
        <position position="904"/>
    </location>
</feature>
<feature type="splice variant" id="VSP_056309" description="In isoform 2." evidence="10">
    <location>
        <begin position="1"/>
        <end position="168"/>
    </location>
</feature>
<feature type="sequence variant" id="VAR_039077" description="In dbSNP:rs35559818.">
    <original>G</original>
    <variation>C</variation>
    <location>
        <position position="22"/>
    </location>
</feature>
<feature type="sequence variant" id="VAR_069272" description="In SARCOS; dbSNP:rs397514504." evidence="9">
    <original>V</original>
    <variation>F</variation>
    <location>
        <position position="71"/>
    </location>
</feature>
<feature type="sequence variant" id="VAR_069273" description="In SARCOS; dbSNP:rs149481147." evidence="9">
    <original>P</original>
    <variation>L</variation>
    <location>
        <position position="287"/>
    </location>
</feature>
<feature type="sequence variant" id="VAR_039078" description="In dbSNP:rs35218200.">
    <original>E</original>
    <variation>D</variation>
    <location>
        <position position="372"/>
    </location>
</feature>
<feature type="sequence variant" id="VAR_019687" description="In dbSNP:rs2073817." evidence="7 8">
    <original>R</original>
    <variation>H</variation>
    <location>
        <position position="614"/>
    </location>
</feature>
<feature type="sequence variant" id="VAR_019688" description="In dbSNP:rs886016." evidence="7">
    <original>M</original>
    <variation>V</variation>
    <location>
        <position position="648"/>
    </location>
</feature>
<keyword id="KW-0007">Acetylation</keyword>
<keyword id="KW-0025">Alternative splicing</keyword>
<keyword id="KW-0225">Disease variant</keyword>
<keyword id="KW-0274">FAD</keyword>
<keyword id="KW-0285">Flavoprotein</keyword>
<keyword id="KW-0496">Mitochondrion</keyword>
<keyword id="KW-0560">Oxidoreductase</keyword>
<keyword id="KW-0597">Phosphoprotein</keyword>
<keyword id="KW-1267">Proteomics identification</keyword>
<keyword id="KW-1185">Reference proteome</keyword>
<keyword id="KW-0809">Transit peptide</keyword>
<organism>
    <name type="scientific">Homo sapiens</name>
    <name type="common">Human</name>
    <dbReference type="NCBI Taxonomy" id="9606"/>
    <lineage>
        <taxon>Eukaryota</taxon>
        <taxon>Metazoa</taxon>
        <taxon>Chordata</taxon>
        <taxon>Craniata</taxon>
        <taxon>Vertebrata</taxon>
        <taxon>Euteleostomi</taxon>
        <taxon>Mammalia</taxon>
        <taxon>Eutheria</taxon>
        <taxon>Euarchontoglires</taxon>
        <taxon>Primates</taxon>
        <taxon>Haplorrhini</taxon>
        <taxon>Catarrhini</taxon>
        <taxon>Hominidae</taxon>
        <taxon>Homo</taxon>
    </lineage>
</organism>
<comment type="function">
    <text evidence="2">Catalyzes the last step of the oxidative degradation of choline to glycine. Converts sarcosine into glycine.</text>
</comment>
<comment type="catalytic activity">
    <reaction evidence="2">
        <text>(6S)-5,6,7,8-tetrahydrofolyl-(gamma-L-Glu)(n) + sarcosine + oxidized [electron-transfer flavoprotein] + H(+) = (6R)-5,10-methylenetetrahydrofolyl-(gamma-L-Glu)(n) + reduced [electron-transfer flavoprotein] + glycine</text>
        <dbReference type="Rhea" id="RHEA:19793"/>
        <dbReference type="Rhea" id="RHEA-COMP:10685"/>
        <dbReference type="Rhea" id="RHEA-COMP:10686"/>
        <dbReference type="Rhea" id="RHEA-COMP:13257"/>
        <dbReference type="Rhea" id="RHEA-COMP:14738"/>
        <dbReference type="ChEBI" id="CHEBI:15378"/>
        <dbReference type="ChEBI" id="CHEBI:57305"/>
        <dbReference type="ChEBI" id="CHEBI:57433"/>
        <dbReference type="ChEBI" id="CHEBI:57692"/>
        <dbReference type="ChEBI" id="CHEBI:58307"/>
        <dbReference type="ChEBI" id="CHEBI:136572"/>
        <dbReference type="ChEBI" id="CHEBI:141005"/>
        <dbReference type="EC" id="1.5.8.3"/>
    </reaction>
    <physiologicalReaction direction="left-to-right" evidence="2">
        <dbReference type="Rhea" id="RHEA:19794"/>
    </physiologicalReaction>
</comment>
<comment type="cofactor">
    <cofactor evidence="2">
        <name>FAD</name>
        <dbReference type="ChEBI" id="CHEBI:57692"/>
    </cofactor>
    <text evidence="2">Binds 1 FAD covalently per monomer.</text>
</comment>
<comment type="pathway">
    <text evidence="2">Amine and polyamine degradation; sarcosine degradation; formaldehyde and glycine from sarcosine: step 1/1.</text>
</comment>
<comment type="subcellular location">
    <subcellularLocation>
        <location evidence="2">Mitochondrion matrix</location>
    </subcellularLocation>
</comment>
<comment type="alternative products">
    <event type="alternative splicing"/>
    <isoform>
        <id>Q9UL12-1</id>
        <name>1</name>
        <sequence type="displayed"/>
    </isoform>
    <isoform>
        <id>Q9UL12-2</id>
        <name>2</name>
        <sequence type="described" ref="VSP_056309"/>
    </isoform>
</comment>
<comment type="tissue specificity">
    <text evidence="6">Expressed in pancreas, liver and kidney.</text>
</comment>
<comment type="disease" evidence="6 9">
    <disease id="DI-02279">
        <name>Sarcosinemia</name>
        <acronym>SARCOS</acronym>
        <description>A metabolic disorder characterized by an increased concentration of sarcosine in plasma and an increased excretion of sarcosine in urine. Sarcosinemia is most probably a benign condition without significant clinical problems. Some reports have associated sarcosinemia with intellectual disability and neurologic problems.</description>
        <dbReference type="MIM" id="268900"/>
    </disease>
    <text>The disease is caused by variants affecting the gene represented in this entry.</text>
</comment>
<comment type="similarity">
    <text evidence="11">Belongs to the GcvT family.</text>
</comment>
<comment type="sequence caution" evidence="11">
    <conflict type="frameshift">
        <sequence resource="EMBL-CDS" id="AAD33412"/>
    </conflict>
</comment>
<accession>Q9UL12</accession>
<accession>B2RMR5</accession>
<accession>B4DPI2</accession>
<accession>B7ZLT6</accession>
<accession>Q5SYV0</accession>
<accession>Q9Y280</accession>
<accession>Q9Y2Y3</accession>
<dbReference type="EC" id="1.5.8.3" evidence="2"/>
<dbReference type="EMBL" id="AF095735">
    <property type="protein sequence ID" value="AAD53398.2"/>
    <property type="molecule type" value="mRNA"/>
</dbReference>
<dbReference type="EMBL" id="AF162428">
    <property type="protein sequence ID" value="AAD43585.1"/>
    <property type="molecule type" value="mRNA"/>
</dbReference>
<dbReference type="EMBL" id="AF140745">
    <property type="protein sequence ID" value="AAD32214.1"/>
    <property type="molecule type" value="Genomic_DNA"/>
</dbReference>
<dbReference type="EMBL" id="AF140726">
    <property type="protein sequence ID" value="AAD32214.1"/>
    <property type="status" value="JOINED"/>
    <property type="molecule type" value="Genomic_DNA"/>
</dbReference>
<dbReference type="EMBL" id="AF140727">
    <property type="protein sequence ID" value="AAD32214.1"/>
    <property type="status" value="JOINED"/>
    <property type="molecule type" value="Genomic_DNA"/>
</dbReference>
<dbReference type="EMBL" id="AF140728">
    <property type="protein sequence ID" value="AAD32214.1"/>
    <property type="status" value="JOINED"/>
    <property type="molecule type" value="Genomic_DNA"/>
</dbReference>
<dbReference type="EMBL" id="AF140729">
    <property type="protein sequence ID" value="AAD32214.1"/>
    <property type="status" value="JOINED"/>
    <property type="molecule type" value="Genomic_DNA"/>
</dbReference>
<dbReference type="EMBL" id="AF140730">
    <property type="protein sequence ID" value="AAD32214.1"/>
    <property type="status" value="JOINED"/>
    <property type="molecule type" value="Genomic_DNA"/>
</dbReference>
<dbReference type="EMBL" id="AF140731">
    <property type="protein sequence ID" value="AAD32214.1"/>
    <property type="status" value="JOINED"/>
    <property type="molecule type" value="Genomic_DNA"/>
</dbReference>
<dbReference type="EMBL" id="AF140732">
    <property type="protein sequence ID" value="AAD32214.1"/>
    <property type="status" value="JOINED"/>
    <property type="molecule type" value="Genomic_DNA"/>
</dbReference>
<dbReference type="EMBL" id="AF140733">
    <property type="protein sequence ID" value="AAD32214.1"/>
    <property type="status" value="JOINED"/>
    <property type="molecule type" value="Genomic_DNA"/>
</dbReference>
<dbReference type="EMBL" id="AF140734">
    <property type="protein sequence ID" value="AAD32214.1"/>
    <property type="status" value="JOINED"/>
    <property type="molecule type" value="Genomic_DNA"/>
</dbReference>
<dbReference type="EMBL" id="AF140735">
    <property type="protein sequence ID" value="AAD32214.1"/>
    <property type="status" value="JOINED"/>
    <property type="molecule type" value="Genomic_DNA"/>
</dbReference>
<dbReference type="EMBL" id="AF140736">
    <property type="protein sequence ID" value="AAD32214.1"/>
    <property type="status" value="JOINED"/>
    <property type="molecule type" value="Genomic_DNA"/>
</dbReference>
<dbReference type="EMBL" id="AF140737">
    <property type="protein sequence ID" value="AAD32214.1"/>
    <property type="status" value="JOINED"/>
    <property type="molecule type" value="Genomic_DNA"/>
</dbReference>
<dbReference type="EMBL" id="AF140738">
    <property type="protein sequence ID" value="AAD32214.1"/>
    <property type="status" value="JOINED"/>
    <property type="molecule type" value="Genomic_DNA"/>
</dbReference>
<dbReference type="EMBL" id="AF140739">
    <property type="protein sequence ID" value="AAD32214.1"/>
    <property type="status" value="JOINED"/>
    <property type="molecule type" value="Genomic_DNA"/>
</dbReference>
<dbReference type="EMBL" id="AF140740">
    <property type="protein sequence ID" value="AAD32214.1"/>
    <property type="status" value="JOINED"/>
    <property type="molecule type" value="Genomic_DNA"/>
</dbReference>
<dbReference type="EMBL" id="AF140741">
    <property type="protein sequence ID" value="AAD32214.1"/>
    <property type="status" value="JOINED"/>
    <property type="molecule type" value="Genomic_DNA"/>
</dbReference>
<dbReference type="EMBL" id="AF140742">
    <property type="protein sequence ID" value="AAD32214.1"/>
    <property type="status" value="JOINED"/>
    <property type="molecule type" value="Genomic_DNA"/>
</dbReference>
<dbReference type="EMBL" id="AF140743">
    <property type="protein sequence ID" value="AAD32214.1"/>
    <property type="status" value="JOINED"/>
    <property type="molecule type" value="Genomic_DNA"/>
</dbReference>
<dbReference type="EMBL" id="AF140744">
    <property type="protein sequence ID" value="AAD32214.1"/>
    <property type="status" value="JOINED"/>
    <property type="molecule type" value="Genomic_DNA"/>
</dbReference>
<dbReference type="EMBL" id="AK298348">
    <property type="protein sequence ID" value="BAG60594.1"/>
    <property type="molecule type" value="mRNA"/>
</dbReference>
<dbReference type="EMBL" id="AK316494">
    <property type="protein sequence ID" value="BAH14865.1"/>
    <property type="molecule type" value="mRNA"/>
</dbReference>
<dbReference type="EMBL" id="AL365494">
    <property type="status" value="NOT_ANNOTATED_CDS"/>
    <property type="molecule type" value="Genomic_DNA"/>
</dbReference>
<dbReference type="EMBL" id="AL590710">
    <property type="status" value="NOT_ANNOTATED_CDS"/>
    <property type="molecule type" value="Genomic_DNA"/>
</dbReference>
<dbReference type="EMBL" id="CH471090">
    <property type="protein sequence ID" value="EAW88103.1"/>
    <property type="molecule type" value="Genomic_DNA"/>
</dbReference>
<dbReference type="EMBL" id="BC136363">
    <property type="protein sequence ID" value="AAI36364.1"/>
    <property type="molecule type" value="mRNA"/>
</dbReference>
<dbReference type="EMBL" id="BC136364">
    <property type="protein sequence ID" value="AAI36365.1"/>
    <property type="molecule type" value="mRNA"/>
</dbReference>
<dbReference type="EMBL" id="BC144035">
    <property type="protein sequence ID" value="AAI44036.1"/>
    <property type="molecule type" value="mRNA"/>
</dbReference>
<dbReference type="EMBL" id="AF129265">
    <property type="protein sequence ID" value="AAD33412.1"/>
    <property type="status" value="ALT_FRAME"/>
    <property type="molecule type" value="mRNA"/>
</dbReference>
<dbReference type="CCDS" id="CCDS6978.1">
    <molecule id="Q9UL12-1"/>
</dbReference>
<dbReference type="RefSeq" id="NP_001128179.1">
    <molecule id="Q9UL12-1"/>
    <property type="nucleotide sequence ID" value="NM_001134707.2"/>
</dbReference>
<dbReference type="RefSeq" id="NP_009032.2">
    <molecule id="Q9UL12-1"/>
    <property type="nucleotide sequence ID" value="NM_007101.3"/>
</dbReference>
<dbReference type="RefSeq" id="XP_047278850.1">
    <molecule id="Q9UL12-1"/>
    <property type="nucleotide sequence ID" value="XM_047422894.1"/>
</dbReference>
<dbReference type="RefSeq" id="XP_047278851.1">
    <molecule id="Q9UL12-1"/>
    <property type="nucleotide sequence ID" value="XM_047422895.1"/>
</dbReference>
<dbReference type="SMR" id="Q9UL12"/>
<dbReference type="BioGRID" id="108097">
    <property type="interactions" value="54"/>
</dbReference>
<dbReference type="FunCoup" id="Q9UL12">
    <property type="interactions" value="805"/>
</dbReference>
<dbReference type="IntAct" id="Q9UL12">
    <property type="interactions" value="35"/>
</dbReference>
<dbReference type="STRING" id="9606.ENSP00000360938"/>
<dbReference type="GlyGen" id="Q9UL12">
    <property type="glycosylation" value="3 sites, 1 O-linked glycan (1 site)"/>
</dbReference>
<dbReference type="iPTMnet" id="Q9UL12"/>
<dbReference type="PhosphoSitePlus" id="Q9UL12"/>
<dbReference type="BioMuta" id="SARDH"/>
<dbReference type="DMDM" id="52000845"/>
<dbReference type="jPOST" id="Q9UL12"/>
<dbReference type="MassIVE" id="Q9UL12"/>
<dbReference type="PaxDb" id="9606-ENSP00000360938"/>
<dbReference type="PeptideAtlas" id="Q9UL12"/>
<dbReference type="ProteomicsDB" id="4788"/>
<dbReference type="ProteomicsDB" id="84926">
    <molecule id="Q9UL12-1"/>
</dbReference>
<dbReference type="Antibodypedia" id="31926">
    <property type="antibodies" value="68 antibodies from 18 providers"/>
</dbReference>
<dbReference type="DNASU" id="1757"/>
<dbReference type="Ensembl" id="ENST00000371872.8">
    <molecule id="Q9UL12-1"/>
    <property type="protein sequence ID" value="ENSP00000360938.4"/>
    <property type="gene ID" value="ENSG00000123453.19"/>
</dbReference>
<dbReference type="Ensembl" id="ENST00000439388.6">
    <molecule id="Q9UL12-1"/>
    <property type="protein sequence ID" value="ENSP00000403084.1"/>
    <property type="gene ID" value="ENSG00000123453.19"/>
</dbReference>
<dbReference type="GeneID" id="1757"/>
<dbReference type="KEGG" id="hsa:1757"/>
<dbReference type="MANE-Select" id="ENST00000439388.6">
    <property type="protein sequence ID" value="ENSP00000403084.1"/>
    <property type="RefSeq nucleotide sequence ID" value="NM_001134707.2"/>
    <property type="RefSeq protein sequence ID" value="NP_001128179.1"/>
</dbReference>
<dbReference type="UCSC" id="uc004ceo.4">
    <molecule id="Q9UL12-1"/>
    <property type="organism name" value="human"/>
</dbReference>
<dbReference type="AGR" id="HGNC:10536"/>
<dbReference type="CTD" id="1757"/>
<dbReference type="DisGeNET" id="1757"/>
<dbReference type="GeneCards" id="SARDH"/>
<dbReference type="HGNC" id="HGNC:10536">
    <property type="gene designation" value="SARDH"/>
</dbReference>
<dbReference type="HPA" id="ENSG00000123453">
    <property type="expression patterns" value="Group enriched (epididymis, liver, pancreas)"/>
</dbReference>
<dbReference type="MalaCards" id="SARDH"/>
<dbReference type="MIM" id="268900">
    <property type="type" value="phenotype"/>
</dbReference>
<dbReference type="MIM" id="604455">
    <property type="type" value="gene"/>
</dbReference>
<dbReference type="neXtProt" id="NX_Q9UL12"/>
<dbReference type="OpenTargets" id="ENSG00000123453"/>
<dbReference type="Orphanet" id="3129">
    <property type="disease" value="Sarcosinemia"/>
</dbReference>
<dbReference type="PharmGKB" id="PA34944"/>
<dbReference type="VEuPathDB" id="HostDB:ENSG00000123453"/>
<dbReference type="eggNOG" id="KOG2844">
    <property type="taxonomic scope" value="Eukaryota"/>
</dbReference>
<dbReference type="GeneTree" id="ENSGT00940000157589"/>
<dbReference type="HOGENOM" id="CLU_007884_11_4_1"/>
<dbReference type="InParanoid" id="Q9UL12"/>
<dbReference type="OMA" id="MVFKYDQ"/>
<dbReference type="OrthoDB" id="9473082at2759"/>
<dbReference type="PAN-GO" id="Q9UL12">
    <property type="GO annotations" value="5 GO annotations based on evolutionary models"/>
</dbReference>
<dbReference type="PhylomeDB" id="Q9UL12"/>
<dbReference type="TreeFam" id="TF314735"/>
<dbReference type="BioCyc" id="MetaCyc:HS04663-MONOMER"/>
<dbReference type="PathwayCommons" id="Q9UL12"/>
<dbReference type="Reactome" id="R-HSA-6798163">
    <property type="pathway name" value="Choline catabolism"/>
</dbReference>
<dbReference type="SignaLink" id="Q9UL12"/>
<dbReference type="UniPathway" id="UPA00292">
    <property type="reaction ID" value="UER00398"/>
</dbReference>
<dbReference type="BioGRID-ORCS" id="1757">
    <property type="hits" value="26 hits in 1150 CRISPR screens"/>
</dbReference>
<dbReference type="ChiTaRS" id="SARDH">
    <property type="organism name" value="human"/>
</dbReference>
<dbReference type="GeneWiki" id="SARDH"/>
<dbReference type="GenomeRNAi" id="1757"/>
<dbReference type="Pharos" id="Q9UL12">
    <property type="development level" value="Tbio"/>
</dbReference>
<dbReference type="PRO" id="PR:Q9UL12"/>
<dbReference type="Proteomes" id="UP000005640">
    <property type="component" value="Chromosome 9"/>
</dbReference>
<dbReference type="RNAct" id="Q9UL12">
    <property type="molecule type" value="protein"/>
</dbReference>
<dbReference type="Bgee" id="ENSG00000123453">
    <property type="expression patterns" value="Expressed in right lobe of liver and 112 other cell types or tissues"/>
</dbReference>
<dbReference type="ExpressionAtlas" id="Q9UL12">
    <property type="expression patterns" value="baseline and differential"/>
</dbReference>
<dbReference type="GO" id="GO:0005737">
    <property type="term" value="C:cytoplasm"/>
    <property type="evidence" value="ECO:0000318"/>
    <property type="project" value="GO_Central"/>
</dbReference>
<dbReference type="GO" id="GO:0005759">
    <property type="term" value="C:mitochondrial matrix"/>
    <property type="evidence" value="ECO:0000318"/>
    <property type="project" value="GO_Central"/>
</dbReference>
<dbReference type="GO" id="GO:0005739">
    <property type="term" value="C:mitochondrion"/>
    <property type="evidence" value="ECO:0006056"/>
    <property type="project" value="FlyBase"/>
</dbReference>
<dbReference type="GO" id="GO:0008480">
    <property type="term" value="F:sarcosine dehydrogenase activity"/>
    <property type="evidence" value="ECO:0000318"/>
    <property type="project" value="GO_Central"/>
</dbReference>
<dbReference type="GO" id="GO:1901053">
    <property type="term" value="P:sarcosine catabolic process"/>
    <property type="evidence" value="ECO:0000318"/>
    <property type="project" value="GO_Central"/>
</dbReference>
<dbReference type="FunFam" id="3.30.1360.120:FF:000023">
    <property type="entry name" value="Sarcosine dehydrogenase"/>
    <property type="match status" value="1"/>
</dbReference>
<dbReference type="FunFam" id="3.30.9.10:FF:000046">
    <property type="entry name" value="Sarcosine dehydrogenase"/>
    <property type="match status" value="1"/>
</dbReference>
<dbReference type="FunFam" id="3.50.50.60:FF:000769">
    <property type="entry name" value="Sarcosine dehydrogenase"/>
    <property type="match status" value="1"/>
</dbReference>
<dbReference type="FunFam" id="2.40.30.110:FF:000006">
    <property type="entry name" value="Sarcosine dehydrogenase, mitochondrial"/>
    <property type="match status" value="1"/>
</dbReference>
<dbReference type="FunFam" id="3.30.70.1400:FF:000004">
    <property type="entry name" value="Sarcosine dehydrogenase, mitochondrial"/>
    <property type="match status" value="1"/>
</dbReference>
<dbReference type="Gene3D" id="2.40.30.110">
    <property type="entry name" value="Aminomethyltransferase beta-barrel domains"/>
    <property type="match status" value="1"/>
</dbReference>
<dbReference type="Gene3D" id="3.30.70.1400">
    <property type="entry name" value="Aminomethyltransferase beta-barrel domains"/>
    <property type="match status" value="1"/>
</dbReference>
<dbReference type="Gene3D" id="3.30.9.10">
    <property type="entry name" value="D-Amino Acid Oxidase, subunit A, domain 2"/>
    <property type="match status" value="1"/>
</dbReference>
<dbReference type="Gene3D" id="3.50.50.60">
    <property type="entry name" value="FAD/NAD(P)-binding domain"/>
    <property type="match status" value="1"/>
</dbReference>
<dbReference type="Gene3D" id="3.30.1360.120">
    <property type="entry name" value="Probable tRNA modification gtpase trme, domain 1"/>
    <property type="match status" value="1"/>
</dbReference>
<dbReference type="InterPro" id="IPR006076">
    <property type="entry name" value="FAD-dep_OxRdtase"/>
</dbReference>
<dbReference type="InterPro" id="IPR036188">
    <property type="entry name" value="FAD/NAD-bd_sf"/>
</dbReference>
<dbReference type="InterPro" id="IPR032503">
    <property type="entry name" value="FAO_M"/>
</dbReference>
<dbReference type="InterPro" id="IPR013977">
    <property type="entry name" value="GCST_C"/>
</dbReference>
<dbReference type="InterPro" id="IPR006222">
    <property type="entry name" value="GCV_T_N"/>
</dbReference>
<dbReference type="InterPro" id="IPR028896">
    <property type="entry name" value="GcvT/YgfZ/DmdA"/>
</dbReference>
<dbReference type="InterPro" id="IPR029043">
    <property type="entry name" value="GcvT/YgfZ_C"/>
</dbReference>
<dbReference type="InterPro" id="IPR027266">
    <property type="entry name" value="TrmE/GcvT_dom1"/>
</dbReference>
<dbReference type="PANTHER" id="PTHR43757">
    <property type="entry name" value="AMINOMETHYLTRANSFERASE"/>
    <property type="match status" value="1"/>
</dbReference>
<dbReference type="PANTHER" id="PTHR43757:SF11">
    <property type="entry name" value="SARCOSINE DEHYDROGENASE"/>
    <property type="match status" value="1"/>
</dbReference>
<dbReference type="Pfam" id="PF01266">
    <property type="entry name" value="DAO"/>
    <property type="match status" value="1"/>
</dbReference>
<dbReference type="Pfam" id="PF16350">
    <property type="entry name" value="FAO_M"/>
    <property type="match status" value="1"/>
</dbReference>
<dbReference type="Pfam" id="PF01571">
    <property type="entry name" value="GCV_T"/>
    <property type="match status" value="1"/>
</dbReference>
<dbReference type="Pfam" id="PF08669">
    <property type="entry name" value="GCV_T_C"/>
    <property type="match status" value="1"/>
</dbReference>
<dbReference type="SUPFAM" id="SSF101790">
    <property type="entry name" value="Aminomethyltransferase beta-barrel domain"/>
    <property type="match status" value="1"/>
</dbReference>
<dbReference type="SUPFAM" id="SSF54373">
    <property type="entry name" value="FAD-linked reductases, C-terminal domain"/>
    <property type="match status" value="1"/>
</dbReference>
<dbReference type="SUPFAM" id="SSF51905">
    <property type="entry name" value="FAD/NAD(P)-binding domain"/>
    <property type="match status" value="1"/>
</dbReference>
<dbReference type="SUPFAM" id="SSF103025">
    <property type="entry name" value="Folate-binding domain"/>
    <property type="match status" value="1"/>
</dbReference>